<dbReference type="EMBL" id="CH408049">
    <property type="protein sequence ID" value="EDV12452.1"/>
    <property type="molecule type" value="Genomic_DNA"/>
</dbReference>
<dbReference type="SMR" id="B3LP57"/>
<dbReference type="HOGENOM" id="CLU_100293_0_0_1"/>
<dbReference type="OrthoDB" id="6673at4893"/>
<dbReference type="Proteomes" id="UP000008335">
    <property type="component" value="Unassembled WGS sequence"/>
</dbReference>
<dbReference type="GO" id="GO:0005739">
    <property type="term" value="C:mitochondrion"/>
    <property type="evidence" value="ECO:0007669"/>
    <property type="project" value="UniProtKB-SubCell"/>
</dbReference>
<dbReference type="GO" id="GO:0005634">
    <property type="term" value="C:nucleus"/>
    <property type="evidence" value="ECO:0007669"/>
    <property type="project" value="TreeGrafter"/>
</dbReference>
<dbReference type="InterPro" id="IPR010487">
    <property type="entry name" value="NGRN/Rrg9"/>
</dbReference>
<dbReference type="PANTHER" id="PTHR13475">
    <property type="entry name" value="NEUGRIN"/>
    <property type="match status" value="1"/>
</dbReference>
<dbReference type="PANTHER" id="PTHR13475:SF3">
    <property type="entry name" value="NEUGRIN"/>
    <property type="match status" value="1"/>
</dbReference>
<dbReference type="Pfam" id="PF06413">
    <property type="entry name" value="Neugrin"/>
    <property type="match status" value="1"/>
</dbReference>
<evidence type="ECO:0000250" key="1"/>
<evidence type="ECO:0000255" key="2"/>
<evidence type="ECO:0000305" key="3"/>
<sequence length="214" mass="25274">MNILRIACRSFHCLRCGPLLNENRGWSSKKIIKLVNKSSLSNKEFTEKVRDGTKDIPEWKKQKMAVRKKLQGQRWNPPKKISQEQMEALRLLKFNFPELTASDLADRFKISPEAVRRILKSNWKRTDEENNNTYERWKRRGERIKEMYQRKEDADFVSNQIVTSRKIILGSNSNSPELIARNVRTFKPFKPNNSTPEKKNTNKLYILKHLGSKQ</sequence>
<comment type="function">
    <text evidence="1">Required for respiratory activity and maintenance and expression of the mitochondrial genome.</text>
</comment>
<comment type="subcellular location">
    <subcellularLocation>
        <location evidence="1">Mitochondrion</location>
    </subcellularLocation>
</comment>
<comment type="similarity">
    <text evidence="3">Belongs to the RRG9 family.</text>
</comment>
<gene>
    <name type="primary">RRG9</name>
    <name type="ORF">SCRG_03339</name>
</gene>
<protein>
    <recommendedName>
        <fullName>Required for respiratory growth protein 9, mitochondrial</fullName>
    </recommendedName>
</protein>
<name>RRG9_YEAS1</name>
<organism>
    <name type="scientific">Saccharomyces cerevisiae (strain RM11-1a)</name>
    <name type="common">Baker's yeast</name>
    <dbReference type="NCBI Taxonomy" id="285006"/>
    <lineage>
        <taxon>Eukaryota</taxon>
        <taxon>Fungi</taxon>
        <taxon>Dikarya</taxon>
        <taxon>Ascomycota</taxon>
        <taxon>Saccharomycotina</taxon>
        <taxon>Saccharomycetes</taxon>
        <taxon>Saccharomycetales</taxon>
        <taxon>Saccharomycetaceae</taxon>
        <taxon>Saccharomyces</taxon>
    </lineage>
</organism>
<proteinExistence type="inferred from homology"/>
<keyword id="KW-0496">Mitochondrion</keyword>
<keyword id="KW-0809">Transit peptide</keyword>
<feature type="transit peptide" description="Mitochondrion" evidence="2">
    <location>
        <begin position="1"/>
        <end position="18"/>
    </location>
</feature>
<feature type="chain" id="PRO_0000407970" description="Required for respiratory growth protein 9, mitochondrial">
    <location>
        <begin position="19"/>
        <end position="214"/>
    </location>
</feature>
<reference key="1">
    <citation type="submission" date="2005-03" db="EMBL/GenBank/DDBJ databases">
        <title>Annotation of the Saccharomyces cerevisiae RM11-1a genome.</title>
        <authorList>
            <consortium name="The Broad Institute Genome Sequencing Platform"/>
            <person name="Birren B.W."/>
            <person name="Lander E.S."/>
            <person name="Galagan J.E."/>
            <person name="Nusbaum C."/>
            <person name="Devon K."/>
            <person name="Cuomo C."/>
            <person name="Jaffe D.B."/>
            <person name="Butler J."/>
            <person name="Alvarez P."/>
            <person name="Gnerre S."/>
            <person name="Grabherr M."/>
            <person name="Kleber M."/>
            <person name="Mauceli E.W."/>
            <person name="Brockman W."/>
            <person name="MacCallum I.A."/>
            <person name="Rounsley S."/>
            <person name="Young S.K."/>
            <person name="LaButti K."/>
            <person name="Pushparaj V."/>
            <person name="DeCaprio D."/>
            <person name="Crawford M."/>
            <person name="Koehrsen M."/>
            <person name="Engels R."/>
            <person name="Montgomery P."/>
            <person name="Pearson M."/>
            <person name="Howarth C."/>
            <person name="Larson L."/>
            <person name="Luoma S."/>
            <person name="White J."/>
            <person name="O'Leary S."/>
            <person name="Kodira C.D."/>
            <person name="Zeng Q."/>
            <person name="Yandava C."/>
            <person name="Alvarado L."/>
            <person name="Pratt S."/>
            <person name="Kruglyak L."/>
        </authorList>
    </citation>
    <scope>NUCLEOTIDE SEQUENCE [LARGE SCALE GENOMIC DNA]</scope>
    <source>
        <strain>RM11-1a</strain>
    </source>
</reference>
<accession>B3LP57</accession>